<accession>B2IHR4</accession>
<sequence length="167" mass="17495">MSLVALYTGSFDPLTLGHMDVIGNAAVLCDEVIVAIGVNPSKTPLFTAQERITLIESACGPLFASHACKLSVRLFSGLAVEAAREAGAQLLVRGLRDGSDLDFEMQMASMNRVMAPDIQTIFFPAAPAVRHITATLVRQVATMGGDASPFVPPVVAAALAQKTSLPS</sequence>
<keyword id="KW-0067">ATP-binding</keyword>
<keyword id="KW-0173">Coenzyme A biosynthesis</keyword>
<keyword id="KW-0963">Cytoplasm</keyword>
<keyword id="KW-0460">Magnesium</keyword>
<keyword id="KW-0547">Nucleotide-binding</keyword>
<keyword id="KW-0548">Nucleotidyltransferase</keyword>
<keyword id="KW-1185">Reference proteome</keyword>
<keyword id="KW-0808">Transferase</keyword>
<organism>
    <name type="scientific">Beijerinckia indica subsp. indica (strain ATCC 9039 / DSM 1715 / NCIMB 8712)</name>
    <dbReference type="NCBI Taxonomy" id="395963"/>
    <lineage>
        <taxon>Bacteria</taxon>
        <taxon>Pseudomonadati</taxon>
        <taxon>Pseudomonadota</taxon>
        <taxon>Alphaproteobacteria</taxon>
        <taxon>Hyphomicrobiales</taxon>
        <taxon>Beijerinckiaceae</taxon>
        <taxon>Beijerinckia</taxon>
    </lineage>
</organism>
<gene>
    <name evidence="1" type="primary">coaD</name>
    <name type="ordered locus">Bind_2344</name>
</gene>
<name>COAD_BEII9</name>
<evidence type="ECO:0000255" key="1">
    <source>
        <dbReference type="HAMAP-Rule" id="MF_00151"/>
    </source>
</evidence>
<feature type="chain" id="PRO_1000096763" description="Phosphopantetheine adenylyltransferase">
    <location>
        <begin position="1"/>
        <end position="167"/>
    </location>
</feature>
<feature type="binding site" evidence="1">
    <location>
        <begin position="10"/>
        <end position="11"/>
    </location>
    <ligand>
        <name>ATP</name>
        <dbReference type="ChEBI" id="CHEBI:30616"/>
    </ligand>
</feature>
<feature type="binding site" evidence="1">
    <location>
        <position position="10"/>
    </location>
    <ligand>
        <name>substrate</name>
    </ligand>
</feature>
<feature type="binding site" evidence="1">
    <location>
        <position position="18"/>
    </location>
    <ligand>
        <name>ATP</name>
        <dbReference type="ChEBI" id="CHEBI:30616"/>
    </ligand>
</feature>
<feature type="binding site" evidence="1">
    <location>
        <position position="42"/>
    </location>
    <ligand>
        <name>substrate</name>
    </ligand>
</feature>
<feature type="binding site" evidence="1">
    <location>
        <position position="79"/>
    </location>
    <ligand>
        <name>substrate</name>
    </ligand>
</feature>
<feature type="binding site" evidence="1">
    <location>
        <position position="93"/>
    </location>
    <ligand>
        <name>substrate</name>
    </ligand>
</feature>
<feature type="binding site" evidence="1">
    <location>
        <begin position="94"/>
        <end position="96"/>
    </location>
    <ligand>
        <name>ATP</name>
        <dbReference type="ChEBI" id="CHEBI:30616"/>
    </ligand>
</feature>
<feature type="binding site" evidence="1">
    <location>
        <position position="104"/>
    </location>
    <ligand>
        <name>ATP</name>
        <dbReference type="ChEBI" id="CHEBI:30616"/>
    </ligand>
</feature>
<feature type="binding site" evidence="1">
    <location>
        <begin position="129"/>
        <end position="135"/>
    </location>
    <ligand>
        <name>ATP</name>
        <dbReference type="ChEBI" id="CHEBI:30616"/>
    </ligand>
</feature>
<feature type="site" description="Transition state stabilizer" evidence="1">
    <location>
        <position position="18"/>
    </location>
</feature>
<comment type="function">
    <text evidence="1">Reversibly transfers an adenylyl group from ATP to 4'-phosphopantetheine, yielding dephospho-CoA (dPCoA) and pyrophosphate.</text>
</comment>
<comment type="catalytic activity">
    <reaction evidence="1">
        <text>(R)-4'-phosphopantetheine + ATP + H(+) = 3'-dephospho-CoA + diphosphate</text>
        <dbReference type="Rhea" id="RHEA:19801"/>
        <dbReference type="ChEBI" id="CHEBI:15378"/>
        <dbReference type="ChEBI" id="CHEBI:30616"/>
        <dbReference type="ChEBI" id="CHEBI:33019"/>
        <dbReference type="ChEBI" id="CHEBI:57328"/>
        <dbReference type="ChEBI" id="CHEBI:61723"/>
        <dbReference type="EC" id="2.7.7.3"/>
    </reaction>
</comment>
<comment type="cofactor">
    <cofactor evidence="1">
        <name>Mg(2+)</name>
        <dbReference type="ChEBI" id="CHEBI:18420"/>
    </cofactor>
</comment>
<comment type="pathway">
    <text evidence="1">Cofactor biosynthesis; coenzyme A biosynthesis; CoA from (R)-pantothenate: step 4/5.</text>
</comment>
<comment type="subunit">
    <text evidence="1">Homohexamer.</text>
</comment>
<comment type="subcellular location">
    <subcellularLocation>
        <location evidence="1">Cytoplasm</location>
    </subcellularLocation>
</comment>
<comment type="similarity">
    <text evidence="1">Belongs to the bacterial CoaD family.</text>
</comment>
<proteinExistence type="inferred from homology"/>
<protein>
    <recommendedName>
        <fullName evidence="1">Phosphopantetheine adenylyltransferase</fullName>
        <ecNumber evidence="1">2.7.7.3</ecNumber>
    </recommendedName>
    <alternativeName>
        <fullName evidence="1">Dephospho-CoA pyrophosphorylase</fullName>
    </alternativeName>
    <alternativeName>
        <fullName evidence="1">Pantetheine-phosphate adenylyltransferase</fullName>
        <shortName evidence="1">PPAT</shortName>
    </alternativeName>
</protein>
<dbReference type="EC" id="2.7.7.3" evidence="1"/>
<dbReference type="EMBL" id="CP001016">
    <property type="protein sequence ID" value="ACB95957.1"/>
    <property type="molecule type" value="Genomic_DNA"/>
</dbReference>
<dbReference type="RefSeq" id="WP_012385310.1">
    <property type="nucleotide sequence ID" value="NC_010581.1"/>
</dbReference>
<dbReference type="SMR" id="B2IHR4"/>
<dbReference type="STRING" id="395963.Bind_2344"/>
<dbReference type="KEGG" id="bid:Bind_2344"/>
<dbReference type="eggNOG" id="COG0669">
    <property type="taxonomic scope" value="Bacteria"/>
</dbReference>
<dbReference type="HOGENOM" id="CLU_100149_0_1_5"/>
<dbReference type="OrthoDB" id="9806661at2"/>
<dbReference type="UniPathway" id="UPA00241">
    <property type="reaction ID" value="UER00355"/>
</dbReference>
<dbReference type="Proteomes" id="UP000001695">
    <property type="component" value="Chromosome"/>
</dbReference>
<dbReference type="GO" id="GO:0005737">
    <property type="term" value="C:cytoplasm"/>
    <property type="evidence" value="ECO:0007669"/>
    <property type="project" value="UniProtKB-SubCell"/>
</dbReference>
<dbReference type="GO" id="GO:0005524">
    <property type="term" value="F:ATP binding"/>
    <property type="evidence" value="ECO:0007669"/>
    <property type="project" value="UniProtKB-KW"/>
</dbReference>
<dbReference type="GO" id="GO:0004595">
    <property type="term" value="F:pantetheine-phosphate adenylyltransferase activity"/>
    <property type="evidence" value="ECO:0007669"/>
    <property type="project" value="UniProtKB-UniRule"/>
</dbReference>
<dbReference type="GO" id="GO:0015937">
    <property type="term" value="P:coenzyme A biosynthetic process"/>
    <property type="evidence" value="ECO:0007669"/>
    <property type="project" value="UniProtKB-UniRule"/>
</dbReference>
<dbReference type="CDD" id="cd02163">
    <property type="entry name" value="PPAT"/>
    <property type="match status" value="1"/>
</dbReference>
<dbReference type="Gene3D" id="3.40.50.620">
    <property type="entry name" value="HUPs"/>
    <property type="match status" value="1"/>
</dbReference>
<dbReference type="HAMAP" id="MF_00151">
    <property type="entry name" value="PPAT_bact"/>
    <property type="match status" value="1"/>
</dbReference>
<dbReference type="InterPro" id="IPR004821">
    <property type="entry name" value="Cyt_trans-like"/>
</dbReference>
<dbReference type="InterPro" id="IPR001980">
    <property type="entry name" value="PPAT"/>
</dbReference>
<dbReference type="InterPro" id="IPR014729">
    <property type="entry name" value="Rossmann-like_a/b/a_fold"/>
</dbReference>
<dbReference type="NCBIfam" id="TIGR01510">
    <property type="entry name" value="coaD_prev_kdtB"/>
    <property type="match status" value="1"/>
</dbReference>
<dbReference type="NCBIfam" id="TIGR00125">
    <property type="entry name" value="cyt_tran_rel"/>
    <property type="match status" value="1"/>
</dbReference>
<dbReference type="PANTHER" id="PTHR21342">
    <property type="entry name" value="PHOSPHOPANTETHEINE ADENYLYLTRANSFERASE"/>
    <property type="match status" value="1"/>
</dbReference>
<dbReference type="PANTHER" id="PTHR21342:SF1">
    <property type="entry name" value="PHOSPHOPANTETHEINE ADENYLYLTRANSFERASE"/>
    <property type="match status" value="1"/>
</dbReference>
<dbReference type="Pfam" id="PF01467">
    <property type="entry name" value="CTP_transf_like"/>
    <property type="match status" value="1"/>
</dbReference>
<dbReference type="PRINTS" id="PR01020">
    <property type="entry name" value="LPSBIOSNTHSS"/>
</dbReference>
<dbReference type="SUPFAM" id="SSF52374">
    <property type="entry name" value="Nucleotidylyl transferase"/>
    <property type="match status" value="1"/>
</dbReference>
<reference key="1">
    <citation type="journal article" date="2010" name="J. Bacteriol.">
        <title>Complete genome sequence of Beijerinckia indica subsp. indica.</title>
        <authorList>
            <person name="Tamas I."/>
            <person name="Dedysh S.N."/>
            <person name="Liesack W."/>
            <person name="Stott M.B."/>
            <person name="Alam M."/>
            <person name="Murrell J.C."/>
            <person name="Dunfield P.F."/>
        </authorList>
    </citation>
    <scope>NUCLEOTIDE SEQUENCE [LARGE SCALE GENOMIC DNA]</scope>
    <source>
        <strain>ATCC 9039 / DSM 1715 / NCIMB 8712</strain>
    </source>
</reference>